<evidence type="ECO:0000255" key="1">
    <source>
        <dbReference type="HAMAP-Rule" id="MF_00184"/>
    </source>
</evidence>
<evidence type="ECO:0000255" key="2">
    <source>
        <dbReference type="PROSITE-ProRule" id="PRU01228"/>
    </source>
</evidence>
<feature type="chain" id="PRO_0000101063" description="Threonine--tRNA ligase">
    <location>
        <begin position="1"/>
        <end position="647"/>
    </location>
</feature>
<feature type="domain" description="TGS" evidence="2">
    <location>
        <begin position="1"/>
        <end position="61"/>
    </location>
</feature>
<feature type="region of interest" description="Catalytic" evidence="1">
    <location>
        <begin position="240"/>
        <end position="538"/>
    </location>
</feature>
<feature type="binding site" evidence="1">
    <location>
        <position position="334"/>
    </location>
    <ligand>
        <name>Zn(2+)</name>
        <dbReference type="ChEBI" id="CHEBI:29105"/>
    </ligand>
</feature>
<feature type="binding site" evidence="1">
    <location>
        <position position="385"/>
    </location>
    <ligand>
        <name>Zn(2+)</name>
        <dbReference type="ChEBI" id="CHEBI:29105"/>
    </ligand>
</feature>
<feature type="binding site" evidence="1">
    <location>
        <position position="515"/>
    </location>
    <ligand>
        <name>Zn(2+)</name>
        <dbReference type="ChEBI" id="CHEBI:29105"/>
    </ligand>
</feature>
<dbReference type="EC" id="6.1.1.3" evidence="1"/>
<dbReference type="EMBL" id="AE014074">
    <property type="protein sequence ID" value="AAM78972.1"/>
    <property type="molecule type" value="Genomic_DNA"/>
</dbReference>
<dbReference type="RefSeq" id="WP_011054265.1">
    <property type="nucleotide sequence ID" value="NC_004070.1"/>
</dbReference>
<dbReference type="SMR" id="P0DG58"/>
<dbReference type="KEGG" id="spg:SpyM3_0365"/>
<dbReference type="HOGENOM" id="CLU_008554_0_1_9"/>
<dbReference type="Proteomes" id="UP000000564">
    <property type="component" value="Chromosome"/>
</dbReference>
<dbReference type="GO" id="GO:0005737">
    <property type="term" value="C:cytoplasm"/>
    <property type="evidence" value="ECO:0007669"/>
    <property type="project" value="UniProtKB-SubCell"/>
</dbReference>
<dbReference type="GO" id="GO:0005524">
    <property type="term" value="F:ATP binding"/>
    <property type="evidence" value="ECO:0007669"/>
    <property type="project" value="UniProtKB-UniRule"/>
</dbReference>
<dbReference type="GO" id="GO:0140096">
    <property type="term" value="F:catalytic activity, acting on a protein"/>
    <property type="evidence" value="ECO:0007669"/>
    <property type="project" value="UniProtKB-ARBA"/>
</dbReference>
<dbReference type="GO" id="GO:0046872">
    <property type="term" value="F:metal ion binding"/>
    <property type="evidence" value="ECO:0007669"/>
    <property type="project" value="UniProtKB-KW"/>
</dbReference>
<dbReference type="GO" id="GO:0004829">
    <property type="term" value="F:threonine-tRNA ligase activity"/>
    <property type="evidence" value="ECO:0007669"/>
    <property type="project" value="UniProtKB-UniRule"/>
</dbReference>
<dbReference type="GO" id="GO:0016740">
    <property type="term" value="F:transferase activity"/>
    <property type="evidence" value="ECO:0007669"/>
    <property type="project" value="UniProtKB-ARBA"/>
</dbReference>
<dbReference type="GO" id="GO:0000049">
    <property type="term" value="F:tRNA binding"/>
    <property type="evidence" value="ECO:0007669"/>
    <property type="project" value="UniProtKB-KW"/>
</dbReference>
<dbReference type="GO" id="GO:0006435">
    <property type="term" value="P:threonyl-tRNA aminoacylation"/>
    <property type="evidence" value="ECO:0007669"/>
    <property type="project" value="UniProtKB-UniRule"/>
</dbReference>
<dbReference type="CDD" id="cd01667">
    <property type="entry name" value="TGS_ThrRS"/>
    <property type="match status" value="1"/>
</dbReference>
<dbReference type="CDD" id="cd00860">
    <property type="entry name" value="ThrRS_anticodon"/>
    <property type="match status" value="1"/>
</dbReference>
<dbReference type="CDD" id="cd00771">
    <property type="entry name" value="ThrRS_core"/>
    <property type="match status" value="1"/>
</dbReference>
<dbReference type="FunFam" id="3.10.20.30:FF:000005">
    <property type="entry name" value="Threonine--tRNA ligase"/>
    <property type="match status" value="1"/>
</dbReference>
<dbReference type="FunFam" id="3.30.54.20:FF:000002">
    <property type="entry name" value="Threonine--tRNA ligase"/>
    <property type="match status" value="1"/>
</dbReference>
<dbReference type="FunFam" id="3.30.930.10:FF:000002">
    <property type="entry name" value="Threonine--tRNA ligase"/>
    <property type="match status" value="1"/>
</dbReference>
<dbReference type="FunFam" id="3.40.50.800:FF:000001">
    <property type="entry name" value="Threonine--tRNA ligase"/>
    <property type="match status" value="1"/>
</dbReference>
<dbReference type="FunFam" id="3.30.980.10:FF:000005">
    <property type="entry name" value="Threonyl-tRNA synthetase, mitochondrial"/>
    <property type="match status" value="1"/>
</dbReference>
<dbReference type="Gene3D" id="3.10.20.30">
    <property type="match status" value="1"/>
</dbReference>
<dbReference type="Gene3D" id="3.30.54.20">
    <property type="match status" value="1"/>
</dbReference>
<dbReference type="Gene3D" id="3.40.50.800">
    <property type="entry name" value="Anticodon-binding domain"/>
    <property type="match status" value="1"/>
</dbReference>
<dbReference type="Gene3D" id="3.30.930.10">
    <property type="entry name" value="Bira Bifunctional Protein, Domain 2"/>
    <property type="match status" value="1"/>
</dbReference>
<dbReference type="Gene3D" id="3.30.980.10">
    <property type="entry name" value="Threonyl-trna Synthetase, Chain A, domain 2"/>
    <property type="match status" value="1"/>
</dbReference>
<dbReference type="HAMAP" id="MF_00184">
    <property type="entry name" value="Thr_tRNA_synth"/>
    <property type="match status" value="1"/>
</dbReference>
<dbReference type="InterPro" id="IPR002314">
    <property type="entry name" value="aa-tRNA-synt_IIb"/>
</dbReference>
<dbReference type="InterPro" id="IPR006195">
    <property type="entry name" value="aa-tRNA-synth_II"/>
</dbReference>
<dbReference type="InterPro" id="IPR045864">
    <property type="entry name" value="aa-tRNA-synth_II/BPL/LPL"/>
</dbReference>
<dbReference type="InterPro" id="IPR004154">
    <property type="entry name" value="Anticodon-bd"/>
</dbReference>
<dbReference type="InterPro" id="IPR036621">
    <property type="entry name" value="Anticodon-bd_dom_sf"/>
</dbReference>
<dbReference type="InterPro" id="IPR012675">
    <property type="entry name" value="Beta-grasp_dom_sf"/>
</dbReference>
<dbReference type="InterPro" id="IPR004095">
    <property type="entry name" value="TGS"/>
</dbReference>
<dbReference type="InterPro" id="IPR012676">
    <property type="entry name" value="TGS-like"/>
</dbReference>
<dbReference type="InterPro" id="IPR002320">
    <property type="entry name" value="Thr-tRNA-ligase_IIa"/>
</dbReference>
<dbReference type="InterPro" id="IPR018163">
    <property type="entry name" value="Thr/Ala-tRNA-synth_IIc_edit"/>
</dbReference>
<dbReference type="InterPro" id="IPR047246">
    <property type="entry name" value="ThrRS_anticodon"/>
</dbReference>
<dbReference type="InterPro" id="IPR033728">
    <property type="entry name" value="ThrRS_core"/>
</dbReference>
<dbReference type="InterPro" id="IPR012947">
    <property type="entry name" value="tRNA_SAD"/>
</dbReference>
<dbReference type="NCBIfam" id="TIGR00418">
    <property type="entry name" value="thrS"/>
    <property type="match status" value="1"/>
</dbReference>
<dbReference type="PANTHER" id="PTHR11451:SF56">
    <property type="entry name" value="THREONINE--TRNA LIGASE 1"/>
    <property type="match status" value="1"/>
</dbReference>
<dbReference type="PANTHER" id="PTHR11451">
    <property type="entry name" value="THREONINE-TRNA LIGASE"/>
    <property type="match status" value="1"/>
</dbReference>
<dbReference type="Pfam" id="PF03129">
    <property type="entry name" value="HGTP_anticodon"/>
    <property type="match status" value="1"/>
</dbReference>
<dbReference type="Pfam" id="PF02824">
    <property type="entry name" value="TGS"/>
    <property type="match status" value="1"/>
</dbReference>
<dbReference type="Pfam" id="PF00587">
    <property type="entry name" value="tRNA-synt_2b"/>
    <property type="match status" value="1"/>
</dbReference>
<dbReference type="Pfam" id="PF07973">
    <property type="entry name" value="tRNA_SAD"/>
    <property type="match status" value="1"/>
</dbReference>
<dbReference type="PRINTS" id="PR01047">
    <property type="entry name" value="TRNASYNTHTHR"/>
</dbReference>
<dbReference type="SMART" id="SM00863">
    <property type="entry name" value="tRNA_SAD"/>
    <property type="match status" value="1"/>
</dbReference>
<dbReference type="SUPFAM" id="SSF52954">
    <property type="entry name" value="Class II aaRS ABD-related"/>
    <property type="match status" value="1"/>
</dbReference>
<dbReference type="SUPFAM" id="SSF55681">
    <property type="entry name" value="Class II aaRS and biotin synthetases"/>
    <property type="match status" value="1"/>
</dbReference>
<dbReference type="SUPFAM" id="SSF81271">
    <property type="entry name" value="TGS-like"/>
    <property type="match status" value="1"/>
</dbReference>
<dbReference type="SUPFAM" id="SSF55186">
    <property type="entry name" value="ThrRS/AlaRS common domain"/>
    <property type="match status" value="1"/>
</dbReference>
<dbReference type="PROSITE" id="PS50862">
    <property type="entry name" value="AA_TRNA_LIGASE_II"/>
    <property type="match status" value="1"/>
</dbReference>
<dbReference type="PROSITE" id="PS51880">
    <property type="entry name" value="TGS"/>
    <property type="match status" value="1"/>
</dbReference>
<name>SYT_STRP3</name>
<proteinExistence type="inferred from homology"/>
<keyword id="KW-0030">Aminoacyl-tRNA synthetase</keyword>
<keyword id="KW-0067">ATP-binding</keyword>
<keyword id="KW-0963">Cytoplasm</keyword>
<keyword id="KW-0436">Ligase</keyword>
<keyword id="KW-0479">Metal-binding</keyword>
<keyword id="KW-0547">Nucleotide-binding</keyword>
<keyword id="KW-0648">Protein biosynthesis</keyword>
<keyword id="KW-0694">RNA-binding</keyword>
<keyword id="KW-0820">tRNA-binding</keyword>
<keyword id="KW-0862">Zinc</keyword>
<reference key="1">
    <citation type="journal article" date="2002" name="Proc. Natl. Acad. Sci. U.S.A.">
        <title>Genome sequence of a serotype M3 strain of group A Streptococcus: phage-encoded toxins, the high-virulence phenotype, and clone emergence.</title>
        <authorList>
            <person name="Beres S.B."/>
            <person name="Sylva G.L."/>
            <person name="Barbian K.D."/>
            <person name="Lei B."/>
            <person name="Hoff J.S."/>
            <person name="Mammarella N.D."/>
            <person name="Liu M.-Y."/>
            <person name="Smoot J.C."/>
            <person name="Porcella S.F."/>
            <person name="Parkins L.D."/>
            <person name="Campbell D.S."/>
            <person name="Smith T.M."/>
            <person name="McCormick J.K."/>
            <person name="Leung D.Y.M."/>
            <person name="Schlievert P.M."/>
            <person name="Musser J.M."/>
        </authorList>
    </citation>
    <scope>NUCLEOTIDE SEQUENCE [LARGE SCALE GENOMIC DNA]</scope>
    <source>
        <strain>ATCC BAA-595 / MGAS315</strain>
    </source>
</reference>
<gene>
    <name evidence="1" type="primary">thrS</name>
    <name type="ordered locus">SpyM3_0365</name>
</gene>
<accession>P0DG58</accession>
<accession>Q8K8C0</accession>
<sequence>MIKITFPDGAVREFESGVTTFDIAESISKSLAKKALAGKFNDQLIDTTRAIEEDGSIEIVTPDHKDAYEVLRHSAAHLFAQAAKRLFPNLHLGVGPAIAEGFYYDTDNTEGQISNEDLPRIEAEMQKIVTENYPCIREEVTKEEALELFKDDPYKVELINEHAGAGLTVYRQGEFVDLCRGPHVPSTGRIQVFHLLNVAGAYWRGNSDNNMMQRIYGTAWFDKKDLKAYLTRLEEAKERDHRKLGKELDLFMISQEVGQGLPFWLPDGATIRRTLERYITDKELASGYQHVYTPPLASVELYKTSGHWDHYQEDMFPVMDMGDGEEFVLRPMNCPHHIQVYKNHVRSYRELPIRIAELGMMHRYEKSGALSGLQRVREMTLNDGHIFVTPEQIQEEFQRALQLIIDVYADFNLTDYRFRLSYRDPNDTHKYYDNDEMWENAQSMLKAALDEMGVDYFEAEGEAAFYGPKLDIQVKTALGNEETLSTIQLDFLLPERFDLKYIGADGEEHRPVMIHRGVISTMERFTAILIETYKGAFPTWLAPHQVTVIPISNEAHIDYAWEVAKTLRDRGVRADVDDRNEKMQYKIRASQTSKIPYQLIVGDKEMEEKSVNVRRYGSKATHTESVEEFVENILADIARKSRPDAQA</sequence>
<organism>
    <name type="scientific">Streptococcus pyogenes serotype M3 (strain ATCC BAA-595 / MGAS315)</name>
    <dbReference type="NCBI Taxonomy" id="198466"/>
    <lineage>
        <taxon>Bacteria</taxon>
        <taxon>Bacillati</taxon>
        <taxon>Bacillota</taxon>
        <taxon>Bacilli</taxon>
        <taxon>Lactobacillales</taxon>
        <taxon>Streptococcaceae</taxon>
        <taxon>Streptococcus</taxon>
    </lineage>
</organism>
<comment type="function">
    <text evidence="1">Catalyzes the attachment of threonine to tRNA(Thr) in a two-step reaction: L-threonine is first activated by ATP to form Thr-AMP and then transferred to the acceptor end of tRNA(Thr). Also edits incorrectly charged L-seryl-tRNA(Thr).</text>
</comment>
<comment type="catalytic activity">
    <reaction evidence="1">
        <text>tRNA(Thr) + L-threonine + ATP = L-threonyl-tRNA(Thr) + AMP + diphosphate + H(+)</text>
        <dbReference type="Rhea" id="RHEA:24624"/>
        <dbReference type="Rhea" id="RHEA-COMP:9670"/>
        <dbReference type="Rhea" id="RHEA-COMP:9704"/>
        <dbReference type="ChEBI" id="CHEBI:15378"/>
        <dbReference type="ChEBI" id="CHEBI:30616"/>
        <dbReference type="ChEBI" id="CHEBI:33019"/>
        <dbReference type="ChEBI" id="CHEBI:57926"/>
        <dbReference type="ChEBI" id="CHEBI:78442"/>
        <dbReference type="ChEBI" id="CHEBI:78534"/>
        <dbReference type="ChEBI" id="CHEBI:456215"/>
        <dbReference type="EC" id="6.1.1.3"/>
    </reaction>
</comment>
<comment type="cofactor">
    <cofactor evidence="1">
        <name>Zn(2+)</name>
        <dbReference type="ChEBI" id="CHEBI:29105"/>
    </cofactor>
    <text evidence="1">Binds 1 zinc ion per subunit.</text>
</comment>
<comment type="subunit">
    <text evidence="1">Homodimer.</text>
</comment>
<comment type="subcellular location">
    <subcellularLocation>
        <location evidence="1">Cytoplasm</location>
    </subcellularLocation>
</comment>
<comment type="similarity">
    <text evidence="1">Belongs to the class-II aminoacyl-tRNA synthetase family.</text>
</comment>
<protein>
    <recommendedName>
        <fullName evidence="1">Threonine--tRNA ligase</fullName>
        <ecNumber evidence="1">6.1.1.3</ecNumber>
    </recommendedName>
    <alternativeName>
        <fullName evidence="1">Threonyl-tRNA synthetase</fullName>
        <shortName evidence="1">ThrRS</shortName>
    </alternativeName>
</protein>